<gene>
    <name type="primary">RCF1</name>
    <name type="synonym">AIM31</name>
    <name type="ordered locus">CAALFM_C503800WA</name>
    <name type="ORF">CaO19.1114</name>
    <name type="ORF">CaO19.8711</name>
</gene>
<proteinExistence type="inferred from homology"/>
<evidence type="ECO:0000250" key="1"/>
<evidence type="ECO:0000255" key="2"/>
<evidence type="ECO:0000255" key="3">
    <source>
        <dbReference type="PROSITE-ProRule" id="PRU00836"/>
    </source>
</evidence>
<evidence type="ECO:0000305" key="4"/>
<comment type="function">
    <text evidence="1">Cytochrome c oxidase subunit which plays a role in assembly of respiratory supercomplexes.</text>
</comment>
<comment type="subunit">
    <text evidence="1">Associates with the respiratory chain complex III/complex IV supercomplex.</text>
</comment>
<comment type="subcellular location">
    <subcellularLocation>
        <location evidence="3">Mitochondrion membrane</location>
        <topology evidence="3">Multi-pass membrane protein</topology>
    </subcellularLocation>
</comment>
<comment type="similarity">
    <text evidence="4">Belongs to the RCF1 family.</text>
</comment>
<sequence>MSVRLPSSMSYGEEEEPDVLQKMWDKSKQQPFVPLGSLLTAGAVLLAARSMKRGEKLKTQRYFRYRIGFQLATLVALVGGGFYYGTETSQHKQTREDKLREKAKQREKLWIEELERRDAIIQARKQRLEESKKELRELAKQGFIEEKESNDKKED</sequence>
<organism>
    <name type="scientific">Candida albicans (strain SC5314 / ATCC MYA-2876)</name>
    <name type="common">Yeast</name>
    <dbReference type="NCBI Taxonomy" id="237561"/>
    <lineage>
        <taxon>Eukaryota</taxon>
        <taxon>Fungi</taxon>
        <taxon>Dikarya</taxon>
        <taxon>Ascomycota</taxon>
        <taxon>Saccharomycotina</taxon>
        <taxon>Pichiomycetes</taxon>
        <taxon>Debaryomycetaceae</taxon>
        <taxon>Candida/Lodderomyces clade</taxon>
        <taxon>Candida</taxon>
    </lineage>
</organism>
<dbReference type="EMBL" id="CP017627">
    <property type="protein sequence ID" value="AOW29790.1"/>
    <property type="molecule type" value="Genomic_DNA"/>
</dbReference>
<dbReference type="RefSeq" id="XP_019330971.1">
    <property type="nucleotide sequence ID" value="XM_019475426.1"/>
</dbReference>
<dbReference type="SMR" id="Q59N74"/>
<dbReference type="FunCoup" id="Q59N74">
    <property type="interactions" value="97"/>
</dbReference>
<dbReference type="STRING" id="237561.Q59N74"/>
<dbReference type="EnsemblFungi" id="C5_03800W_A-T">
    <property type="protein sequence ID" value="C5_03800W_A-T-p1"/>
    <property type="gene ID" value="C5_03800W_A"/>
</dbReference>
<dbReference type="GeneID" id="3647230"/>
<dbReference type="KEGG" id="cal:CAALFM_C503800WA"/>
<dbReference type="CGD" id="CAL0000199655">
    <property type="gene designation" value="orf19.8711"/>
</dbReference>
<dbReference type="VEuPathDB" id="FungiDB:C5_03800W_A"/>
<dbReference type="eggNOG" id="KOG4431">
    <property type="taxonomic scope" value="Eukaryota"/>
</dbReference>
<dbReference type="HOGENOM" id="CLU_087356_1_0_1"/>
<dbReference type="InParanoid" id="Q59N74"/>
<dbReference type="OMA" id="YYRTERT"/>
<dbReference type="OrthoDB" id="6604018at2759"/>
<dbReference type="PRO" id="PR:Q59N74"/>
<dbReference type="Proteomes" id="UP000000559">
    <property type="component" value="Chromosome 5"/>
</dbReference>
<dbReference type="GO" id="GO:0005743">
    <property type="term" value="C:mitochondrial inner membrane"/>
    <property type="evidence" value="ECO:0007669"/>
    <property type="project" value="EnsemblFungi"/>
</dbReference>
<dbReference type="GO" id="GO:0005739">
    <property type="term" value="C:mitochondrion"/>
    <property type="evidence" value="ECO:0000318"/>
    <property type="project" value="GO_Central"/>
</dbReference>
<dbReference type="GO" id="GO:0005886">
    <property type="term" value="C:plasma membrane"/>
    <property type="evidence" value="ECO:0000314"/>
    <property type="project" value="CGD"/>
</dbReference>
<dbReference type="GO" id="GO:0098803">
    <property type="term" value="C:respiratory chain complex"/>
    <property type="evidence" value="ECO:0007669"/>
    <property type="project" value="EnsemblFungi"/>
</dbReference>
<dbReference type="GO" id="GO:0033617">
    <property type="term" value="P:mitochondrial cytochrome c oxidase assembly"/>
    <property type="evidence" value="ECO:0007669"/>
    <property type="project" value="EnsemblFungi"/>
</dbReference>
<dbReference type="GO" id="GO:0097250">
    <property type="term" value="P:mitochondrial respirasome assembly"/>
    <property type="evidence" value="ECO:0000318"/>
    <property type="project" value="GO_Central"/>
</dbReference>
<dbReference type="GO" id="GO:0010155">
    <property type="term" value="P:regulation of proton transport"/>
    <property type="evidence" value="ECO:0007669"/>
    <property type="project" value="EnsemblFungi"/>
</dbReference>
<dbReference type="Gene3D" id="6.10.140.1320">
    <property type="match status" value="1"/>
</dbReference>
<dbReference type="InterPro" id="IPR007667">
    <property type="entry name" value="Hypoxia_induced_domain"/>
</dbReference>
<dbReference type="InterPro" id="IPR050355">
    <property type="entry name" value="RCF1"/>
</dbReference>
<dbReference type="PANTHER" id="PTHR12297:SF3">
    <property type="entry name" value="HIG1 DOMAIN FAMILY MEMBER 1A"/>
    <property type="match status" value="1"/>
</dbReference>
<dbReference type="PANTHER" id="PTHR12297">
    <property type="entry name" value="HYPOXIA-INDUCBILE GENE 1 HIG1 -RELATED"/>
    <property type="match status" value="1"/>
</dbReference>
<dbReference type="Pfam" id="PF04588">
    <property type="entry name" value="HIG_1_N"/>
    <property type="match status" value="1"/>
</dbReference>
<dbReference type="PROSITE" id="PS51503">
    <property type="entry name" value="HIG1"/>
    <property type="match status" value="1"/>
</dbReference>
<accession>Q59N74</accession>
<accession>A0A1D8PNT9</accession>
<protein>
    <recommendedName>
        <fullName>Respiratory supercomplex factor 1, mitochondrial</fullName>
    </recommendedName>
</protein>
<name>RCF1_CANAL</name>
<keyword id="KW-0175">Coiled coil</keyword>
<keyword id="KW-0472">Membrane</keyword>
<keyword id="KW-0496">Mitochondrion</keyword>
<keyword id="KW-1185">Reference proteome</keyword>
<keyword id="KW-0812">Transmembrane</keyword>
<keyword id="KW-1133">Transmembrane helix</keyword>
<feature type="chain" id="PRO_0000399624" description="Respiratory supercomplex factor 1, mitochondrial">
    <location>
        <begin position="1"/>
        <end position="155"/>
    </location>
</feature>
<feature type="transmembrane region" description="Helical" evidence="3">
    <location>
        <begin position="32"/>
        <end position="49"/>
    </location>
</feature>
<feature type="transmembrane region" description="Helical" evidence="3">
    <location>
        <begin position="62"/>
        <end position="84"/>
    </location>
</feature>
<feature type="domain" description="HIG1" evidence="3">
    <location>
        <begin position="4"/>
        <end position="95"/>
    </location>
</feature>
<feature type="coiled-coil region" evidence="2">
    <location>
        <begin position="111"/>
        <end position="141"/>
    </location>
</feature>
<reference key="1">
    <citation type="journal article" date="2004" name="Proc. Natl. Acad. Sci. U.S.A.">
        <title>The diploid genome sequence of Candida albicans.</title>
        <authorList>
            <person name="Jones T."/>
            <person name="Federspiel N.A."/>
            <person name="Chibana H."/>
            <person name="Dungan J."/>
            <person name="Kalman S."/>
            <person name="Magee B.B."/>
            <person name="Newport G."/>
            <person name="Thorstenson Y.R."/>
            <person name="Agabian N."/>
            <person name="Magee P.T."/>
            <person name="Davis R.W."/>
            <person name="Scherer S."/>
        </authorList>
    </citation>
    <scope>NUCLEOTIDE SEQUENCE [LARGE SCALE GENOMIC DNA]</scope>
    <source>
        <strain>SC5314 / ATCC MYA-2876</strain>
    </source>
</reference>
<reference key="2">
    <citation type="journal article" date="2007" name="Genome Biol.">
        <title>Assembly of the Candida albicans genome into sixteen supercontigs aligned on the eight chromosomes.</title>
        <authorList>
            <person name="van het Hoog M."/>
            <person name="Rast T.J."/>
            <person name="Martchenko M."/>
            <person name="Grindle S."/>
            <person name="Dignard D."/>
            <person name="Hogues H."/>
            <person name="Cuomo C."/>
            <person name="Berriman M."/>
            <person name="Scherer S."/>
            <person name="Magee B.B."/>
            <person name="Whiteway M."/>
            <person name="Chibana H."/>
            <person name="Nantel A."/>
            <person name="Magee P.T."/>
        </authorList>
    </citation>
    <scope>GENOME REANNOTATION</scope>
    <source>
        <strain>SC5314 / ATCC MYA-2876</strain>
    </source>
</reference>
<reference key="3">
    <citation type="journal article" date="2013" name="Genome Biol.">
        <title>Assembly of a phased diploid Candida albicans genome facilitates allele-specific measurements and provides a simple model for repeat and indel structure.</title>
        <authorList>
            <person name="Muzzey D."/>
            <person name="Schwartz K."/>
            <person name="Weissman J.S."/>
            <person name="Sherlock G."/>
        </authorList>
    </citation>
    <scope>NUCLEOTIDE SEQUENCE [LARGE SCALE GENOMIC DNA]</scope>
    <scope>GENOME REANNOTATION</scope>
    <source>
        <strain>SC5314 / ATCC MYA-2876</strain>
    </source>
</reference>